<gene>
    <name type="primary">ORF1</name>
</gene>
<evidence type="ECO:0000250" key="1"/>
<evidence type="ECO:0000250" key="2">
    <source>
        <dbReference type="UniProtKB" id="P0C6K4"/>
    </source>
</evidence>
<evidence type="ECO:0000250" key="3">
    <source>
        <dbReference type="UniProtKB" id="Q3ZN07"/>
    </source>
</evidence>
<evidence type="ECO:0000255" key="4"/>
<evidence type="ECO:0000255" key="5">
    <source>
        <dbReference type="PROSITE-ProRule" id="PRU00539"/>
    </source>
</evidence>
<evidence type="ECO:0000256" key="6">
    <source>
        <dbReference type="SAM" id="MobiDB-lite"/>
    </source>
</evidence>
<evidence type="ECO:0000305" key="7"/>
<comment type="function">
    <molecule>Serine protease p27</molecule>
    <text evidence="2">Responsible for the cleavage of the polyprotein into functional products.</text>
</comment>
<comment type="function">
    <molecule>Viral genome-linked protein</molecule>
    <text evidence="3">Protein covalently attached to the 5' extremity of the genomic and subgenomic RNAs (By similarity). It may serve as a primer for the replicase (By similarity).</text>
</comment>
<comment type="catalytic activity">
    <reaction evidence="5">
        <text>RNA(n) + a ribonucleoside 5'-triphosphate = RNA(n+1) + diphosphate</text>
        <dbReference type="Rhea" id="RHEA:21248"/>
        <dbReference type="Rhea" id="RHEA-COMP:14527"/>
        <dbReference type="Rhea" id="RHEA-COMP:17342"/>
        <dbReference type="ChEBI" id="CHEBI:33019"/>
        <dbReference type="ChEBI" id="CHEBI:61557"/>
        <dbReference type="ChEBI" id="CHEBI:140395"/>
        <dbReference type="EC" id="2.7.7.48"/>
    </reaction>
</comment>
<comment type="subunit">
    <molecule>Serine protease p27</molecule>
    <text evidence="2">Monomer.</text>
</comment>
<comment type="subcellular location">
    <molecule>Transmembrane protein 1A</molecule>
    <subcellularLocation>
        <location evidence="7">Host membrane</location>
        <topology evidence="7">Multi-pass membrane protein</topology>
    </subcellularLocation>
</comment>
<comment type="alternative products">
    <event type="ribosomal frameshifting"/>
    <isoform>
        <id>Q9JH66-1</id>
        <name>nsp1ab</name>
        <sequence type="displayed"/>
    </isoform>
    <isoform>
        <id>Q9JH67-1</id>
        <name>nsp1a</name>
        <sequence type="external"/>
    </isoform>
</comment>
<comment type="PTM">
    <text evidence="2">Cleaved by the viral and host proteases (By similarity). The protease is probably autocatalytically cleaved (By similarity).</text>
</comment>
<comment type="miscellaneous">
    <molecule>Isoform nsp1ab</molecule>
    <text>Generated by a ribosomal frameshift at position 830.</text>
</comment>
<comment type="similarity">
    <text evidence="7">Belongs to the astroviridae polyprotein 1AB family.</text>
</comment>
<name>NS1AB_OASV1</name>
<organismHost>
    <name type="scientific">Ovis aries</name>
    <name type="common">Sheep</name>
    <dbReference type="NCBI Taxonomy" id="9940"/>
</organismHost>
<accession>Q9JH66</accession>
<dbReference type="EC" id="3.4.21.-" evidence="2"/>
<dbReference type="EC" id="2.7.7.48"/>
<dbReference type="EMBL" id="Y15937">
    <property type="protein sequence ID" value="CAB95003.1"/>
    <property type="status" value="ALT_SEQ"/>
    <property type="molecule type" value="Genomic_RNA"/>
</dbReference>
<dbReference type="RefSeq" id="NP_059945.2">
    <property type="nucleotide sequence ID" value="NC_002469.1"/>
</dbReference>
<dbReference type="KEGG" id="vg:1449587"/>
<dbReference type="Proteomes" id="UP000007786">
    <property type="component" value="Genome"/>
</dbReference>
<dbReference type="GO" id="GO:0033644">
    <property type="term" value="C:host cell membrane"/>
    <property type="evidence" value="ECO:0007669"/>
    <property type="project" value="UniProtKB-SubCell"/>
</dbReference>
<dbReference type="GO" id="GO:0016020">
    <property type="term" value="C:membrane"/>
    <property type="evidence" value="ECO:0007669"/>
    <property type="project" value="UniProtKB-KW"/>
</dbReference>
<dbReference type="GO" id="GO:0005524">
    <property type="term" value="F:ATP binding"/>
    <property type="evidence" value="ECO:0007669"/>
    <property type="project" value="UniProtKB-KW"/>
</dbReference>
<dbReference type="GO" id="GO:0003723">
    <property type="term" value="F:RNA binding"/>
    <property type="evidence" value="ECO:0007669"/>
    <property type="project" value="InterPro"/>
</dbReference>
<dbReference type="GO" id="GO:0003968">
    <property type="term" value="F:RNA-directed RNA polymerase activity"/>
    <property type="evidence" value="ECO:0007669"/>
    <property type="project" value="UniProtKB-KW"/>
</dbReference>
<dbReference type="GO" id="GO:0008236">
    <property type="term" value="F:serine-type peptidase activity"/>
    <property type="evidence" value="ECO:0007669"/>
    <property type="project" value="UniProtKB-KW"/>
</dbReference>
<dbReference type="GO" id="GO:0006351">
    <property type="term" value="P:DNA-templated transcription"/>
    <property type="evidence" value="ECO:0007669"/>
    <property type="project" value="InterPro"/>
</dbReference>
<dbReference type="GO" id="GO:0006508">
    <property type="term" value="P:proteolysis"/>
    <property type="evidence" value="ECO:0007669"/>
    <property type="project" value="UniProtKB-KW"/>
</dbReference>
<dbReference type="GO" id="GO:0039694">
    <property type="term" value="P:viral RNA genome replication"/>
    <property type="evidence" value="ECO:0007669"/>
    <property type="project" value="InterPro"/>
</dbReference>
<dbReference type="GO" id="GO:0075523">
    <property type="term" value="P:viral translational frameshifting"/>
    <property type="evidence" value="ECO:0007669"/>
    <property type="project" value="UniProtKB-KW"/>
</dbReference>
<dbReference type="CDD" id="cd14686">
    <property type="entry name" value="bZIP"/>
    <property type="match status" value="1"/>
</dbReference>
<dbReference type="CDD" id="cd23172">
    <property type="entry name" value="ps-ssRNAv_Astroviridae_RdRp"/>
    <property type="match status" value="1"/>
</dbReference>
<dbReference type="Gene3D" id="3.30.70.270">
    <property type="match status" value="1"/>
</dbReference>
<dbReference type="Gene3D" id="2.40.10.10">
    <property type="entry name" value="Trypsin-like serine proteases"/>
    <property type="match status" value="2"/>
</dbReference>
<dbReference type="InterPro" id="IPR045835">
    <property type="entry name" value="Astro_1A"/>
</dbReference>
<dbReference type="InterPro" id="IPR043502">
    <property type="entry name" value="DNA/RNA_pol_sf"/>
</dbReference>
<dbReference type="InterPro" id="IPR009003">
    <property type="entry name" value="Peptidase_S1_PA"/>
</dbReference>
<dbReference type="InterPro" id="IPR043504">
    <property type="entry name" value="Peptidase_S1_PA_chymotrypsin"/>
</dbReference>
<dbReference type="InterPro" id="IPR043128">
    <property type="entry name" value="Rev_trsase/Diguanyl_cyclase"/>
</dbReference>
<dbReference type="InterPro" id="IPR001205">
    <property type="entry name" value="RNA-dir_pol_C"/>
</dbReference>
<dbReference type="InterPro" id="IPR007094">
    <property type="entry name" value="RNA-dir_pol_PSvirus"/>
</dbReference>
<dbReference type="Pfam" id="PF19415">
    <property type="entry name" value="Astro_1A"/>
    <property type="match status" value="1"/>
</dbReference>
<dbReference type="Pfam" id="PF00680">
    <property type="entry name" value="RdRP_1"/>
    <property type="match status" value="1"/>
</dbReference>
<dbReference type="Pfam" id="PF13365">
    <property type="entry name" value="Trypsin_2"/>
    <property type="match status" value="1"/>
</dbReference>
<dbReference type="SUPFAM" id="SSF56672">
    <property type="entry name" value="DNA/RNA polymerases"/>
    <property type="match status" value="1"/>
</dbReference>
<dbReference type="SUPFAM" id="SSF50494">
    <property type="entry name" value="Trypsin-like serine proteases"/>
    <property type="match status" value="1"/>
</dbReference>
<dbReference type="PROSITE" id="PS50507">
    <property type="entry name" value="RDRP_SSRNA_POS"/>
    <property type="match status" value="1"/>
</dbReference>
<feature type="chain" id="PRO_0000327301" description="Non-structural polyprotein 1AB">
    <location>
        <begin position="1"/>
        <end position="1351"/>
    </location>
</feature>
<feature type="chain" id="PRO_0000327302" description="Protein p19" evidence="4">
    <location>
        <begin position="1"/>
        <end position="172"/>
    </location>
</feature>
<feature type="chain" id="PRO_0000327303" description="Transmembrane protein 1A" evidence="4">
    <location>
        <begin position="173"/>
        <end position="407"/>
    </location>
</feature>
<feature type="chain" id="PRO_0000327304" description="Serine protease p27" evidence="4">
    <location>
        <begin position="408"/>
        <end position="640"/>
    </location>
</feature>
<feature type="chain" id="PRO_0000419591" description="Viral genome-linked protein" evidence="4">
    <location>
        <begin position="641"/>
        <end position="721"/>
    </location>
</feature>
<feature type="chain" id="PRO_0000327305" description="Protein p20" evidence="4">
    <location>
        <begin position="722"/>
        <end position="826"/>
    </location>
</feature>
<feature type="chain" id="PRO_0000327306" description="RNA-directed RNA polymerase p57" evidence="4">
    <location>
        <begin position="827"/>
        <end position="1351"/>
    </location>
</feature>
<feature type="transmembrane region" description="Helical" evidence="4">
    <location>
        <begin position="153"/>
        <end position="173"/>
    </location>
</feature>
<feature type="transmembrane region" description="Helical" evidence="4">
    <location>
        <begin position="231"/>
        <end position="251"/>
    </location>
</feature>
<feature type="transmembrane region" description="Helical" evidence="4">
    <location>
        <begin position="257"/>
        <end position="277"/>
    </location>
</feature>
<feature type="transmembrane region" description="Helical" evidence="4">
    <location>
        <begin position="304"/>
        <end position="324"/>
    </location>
</feature>
<feature type="transmembrane region" description="Helical" evidence="4">
    <location>
        <begin position="337"/>
        <end position="357"/>
    </location>
</feature>
<feature type="domain" description="RdRp catalytic" evidence="5">
    <location>
        <begin position="1085"/>
        <end position="1217"/>
    </location>
</feature>
<feature type="region of interest" description="Disordered" evidence="6">
    <location>
        <begin position="687"/>
        <end position="708"/>
    </location>
</feature>
<feature type="region of interest" description="Disordered" evidence="6">
    <location>
        <begin position="822"/>
        <end position="842"/>
    </location>
</feature>
<feature type="coiled-coil region" evidence="4">
    <location>
        <begin position="105"/>
        <end position="144"/>
    </location>
</feature>
<feature type="coiled-coil region" evidence="4">
    <location>
        <begin position="579"/>
        <end position="635"/>
    </location>
</feature>
<feature type="compositionally biased region" description="Acidic residues" evidence="6">
    <location>
        <begin position="687"/>
        <end position="699"/>
    </location>
</feature>
<feature type="compositionally biased region" description="Basic residues" evidence="6">
    <location>
        <begin position="822"/>
        <end position="832"/>
    </location>
</feature>
<feature type="compositionally biased region" description="Basic and acidic residues" evidence="6">
    <location>
        <begin position="833"/>
        <end position="842"/>
    </location>
</feature>
<feature type="active site" description="Charge relay system; for serine protease activity" evidence="1">
    <location>
        <position position="452"/>
    </location>
</feature>
<feature type="active site" description="Charge relay system; for serine protease activity" evidence="1">
    <location>
        <position position="481"/>
    </location>
</feature>
<feature type="active site" description="Charge relay system; for serine protease activity" evidence="1">
    <location>
        <position position="544"/>
    </location>
</feature>
<feature type="site" description="Cleavage" evidence="4">
    <location>
        <begin position="172"/>
        <end position="173"/>
    </location>
</feature>
<feature type="site" description="Cleavage" evidence="4">
    <location>
        <begin position="407"/>
        <end position="408"/>
    </location>
</feature>
<feature type="site" description="Cleavage" evidence="2">
    <location>
        <begin position="640"/>
        <end position="641"/>
    </location>
</feature>
<feature type="site" description="Cleavage" evidence="4">
    <location>
        <begin position="721"/>
        <end position="722"/>
    </location>
</feature>
<feature type="site" description="Cleavage" evidence="4">
    <location>
        <begin position="826"/>
        <end position="827"/>
    </location>
</feature>
<feature type="modified residue" description="O-(5'-phospho-RNA)-tyrosine" evidence="3">
    <location>
        <position position="662"/>
    </location>
</feature>
<organism>
    <name type="scientific">Ovine astrovirus 1</name>
    <name type="common">OAstV-1</name>
    <dbReference type="NCBI Taxonomy" id="1239577"/>
    <lineage>
        <taxon>Viruses</taxon>
        <taxon>Riboviria</taxon>
        <taxon>Orthornavirae</taxon>
        <taxon>Pisuviricota</taxon>
        <taxon>Stelpaviricetes</taxon>
        <taxon>Stellavirales</taxon>
        <taxon>Astroviridae</taxon>
        <taxon>Mamastrovirus</taxon>
    </lineage>
</organism>
<sequence length="1351" mass="154740">MNVYDKVLQFGSKKARARGMALNKLSRNRLEDIYAGSGPLVFGFGPIDMVDPGSLNPSIKTLDTVYVAAVQPDNQYVVHHFVPGRNEWVETDASTHQPTALVGVLVQDHKAKTREVEDLKSQLSQLRMEHEILRHEYERLKLKSPIVKPFKPLKVLLFSLLLGLLFAGVTNGARTGTCYAYDEEKDTCLYWEWKDSREVAWYDSYVTEALAIYNRACVYVRSKEFMTYLSLVFQTVFNWYFCATALAVYYMARAENPIVMFVTLALATLSQFQLLAVAVLPLLDFSATMGLWLSMVVFYMSQQISILVSFCVLVLSVMIGTFMADSEYAMMIKGHAVVFAIVCYSHVAMILNIPPWVVSLTMVCYRLWRVCFVFPAERLEIRSADGKVLHTVPTHPNWTAKVTRFVQSLRKGLRTSVAPTARIVPDGIAIVEAREGVGTCFRVKNNLVTSKHVVGSDDAVKIRWGAQEDMARVTYRHPTKDIALMALPTNLQTMPAYKFAKAITDGPIVMTAFDEANLLLVAVTEGVRVEDHMTYSVATRNGMSGAPITTVDGRVIAVHQTNTGFTGGAVIFVPEDIPEVRKISKREQELEDRVKQLEGMLNMDQAYVDSNLIVDLVREAVQREMKVLRTELANLGGFSQKKKGKNKSTKRKRKAVWTEEEYKAMLEKGFTRDQLRIMADAIRDQYYDDEDEQSEEEAGYPDWSDPGDSTDIENEWFGYEQSWKELEPAKSGVVVNTLPKDLVFKYSLDNYPISKQDIQAVAKELKIYEKAISDIISTSVSTDGKWKDDVDAQKILQELDGLWWGINHTLWEHGLMPFTQRRKRVQQPKKLQRGPEDPGPEECKLDYWEQLVEPSKEKFLVPPEYPLLGVVPLDRPISDFDAPVDNLLALLPEPESPDLGFEPAVWGPEAYVKSFEKFDFADPDPNIEKNYPREWAFANLVLHREFDFLADSVVKDITATSKNSESTPGFPKTYWWKTEAEYLAKRGYADYVSEWNRIRGGARPNVLWYLFLKKEILKSTKVRDADIRQIICSDPIFARIGCCFEEDQNERMKRRTKTRMPQCGWSPFFGGFNDRIQRLVAKGNPYWIEFDWTRYDGTIPSQIFKHIKNFRFSMLAKEYQTPELRNMYHWYVDNILRRYVCMPSGEITIQHKGNPSGQVSTTMDNNLVNVFLQAFEYAYLHPEKSMDELRKDWESYDSLIYGDDRLTTSPSVPNDYVTRVVAMYKDIFGMWVKPEKVKVSHSPVGLSFCGFVITHQDGQYLPVPAEEAKLLASLLRPTKKLENMDALYGKLLCYRILNHNLPNDNKFRNYILVALEVMARHYSSRGEEPPFYVTESMLDKLWRGGPKFDYG</sequence>
<protein>
    <recommendedName>
        <fullName>Non-structural polyprotein 1AB</fullName>
    </recommendedName>
    <component>
        <recommendedName>
            <fullName>Protein p19</fullName>
        </recommendedName>
    </component>
    <component>
        <recommendedName>
            <fullName>Transmembrane protein 1A</fullName>
        </recommendedName>
    </component>
    <component>
        <recommendedName>
            <fullName>Serine protease p27</fullName>
            <shortName>p27</shortName>
            <ecNumber evidence="2">3.4.21.-</ecNumber>
        </recommendedName>
    </component>
    <component>
        <recommendedName>
            <fullName>Viral genome-linked protein</fullName>
        </recommendedName>
        <alternativeName>
            <fullName>VPg</fullName>
        </alternativeName>
    </component>
    <component>
        <recommendedName>
            <fullName>Protein p20</fullName>
        </recommendedName>
    </component>
    <component>
        <recommendedName>
            <fullName>RNA-directed RNA polymerase p57</fullName>
            <shortName>p57</shortName>
            <ecNumber>2.7.7.48</ecNumber>
        </recommendedName>
    </component>
</protein>
<keyword id="KW-0067">ATP-binding</keyword>
<keyword id="KW-0175">Coiled coil</keyword>
<keyword id="KW-0191">Covalent protein-RNA linkage</keyword>
<keyword id="KW-1043">Host membrane</keyword>
<keyword id="KW-0378">Hydrolase</keyword>
<keyword id="KW-0472">Membrane</keyword>
<keyword id="KW-0547">Nucleotide-binding</keyword>
<keyword id="KW-0548">Nucleotidyltransferase</keyword>
<keyword id="KW-0597">Phosphoprotein</keyword>
<keyword id="KW-0645">Protease</keyword>
<keyword id="KW-0688">Ribosomal frameshifting</keyword>
<keyword id="KW-0696">RNA-directed RNA polymerase</keyword>
<keyword id="KW-0720">Serine protease</keyword>
<keyword id="KW-0808">Transferase</keyword>
<keyword id="KW-0812">Transmembrane</keyword>
<keyword id="KW-1133">Transmembrane helix</keyword>
<keyword id="KW-0693">Viral RNA replication</keyword>
<proteinExistence type="inferred from homology"/>
<reference key="1">
    <citation type="journal article" date="2003" name="Virus Res.">
        <title>Complete genomic sequences of astroviruses from sheep and turkey: comparison with related viruses.</title>
        <authorList>
            <person name="Jonassen C.M."/>
            <person name="Jonassen T.O."/>
            <person name="Sveen T.M."/>
            <person name="Grinde B."/>
        </authorList>
    </citation>
    <scope>NUCLEOTIDE SEQUENCE [GENOMIC RNA]</scope>
</reference>